<name>BIOB_PSECP</name>
<gene>
    <name evidence="1" type="primary">bioB</name>
    <name type="ordered locus">Achl_0984</name>
</gene>
<dbReference type="EC" id="2.8.1.6" evidence="1"/>
<dbReference type="EMBL" id="CP001341">
    <property type="protein sequence ID" value="ACL38979.1"/>
    <property type="molecule type" value="Genomic_DNA"/>
</dbReference>
<dbReference type="RefSeq" id="WP_015936202.1">
    <property type="nucleotide sequence ID" value="NC_011886.1"/>
</dbReference>
<dbReference type="SMR" id="B8HDH4"/>
<dbReference type="STRING" id="452863.Achl_0984"/>
<dbReference type="KEGG" id="ach:Achl_0984"/>
<dbReference type="eggNOG" id="COG0502">
    <property type="taxonomic scope" value="Bacteria"/>
</dbReference>
<dbReference type="HOGENOM" id="CLU_033172_2_1_11"/>
<dbReference type="OrthoDB" id="9786826at2"/>
<dbReference type="UniPathway" id="UPA00078">
    <property type="reaction ID" value="UER00162"/>
</dbReference>
<dbReference type="Proteomes" id="UP000002505">
    <property type="component" value="Chromosome"/>
</dbReference>
<dbReference type="GO" id="GO:0051537">
    <property type="term" value="F:2 iron, 2 sulfur cluster binding"/>
    <property type="evidence" value="ECO:0007669"/>
    <property type="project" value="UniProtKB-KW"/>
</dbReference>
<dbReference type="GO" id="GO:0051539">
    <property type="term" value="F:4 iron, 4 sulfur cluster binding"/>
    <property type="evidence" value="ECO:0007669"/>
    <property type="project" value="UniProtKB-KW"/>
</dbReference>
<dbReference type="GO" id="GO:0004076">
    <property type="term" value="F:biotin synthase activity"/>
    <property type="evidence" value="ECO:0007669"/>
    <property type="project" value="UniProtKB-UniRule"/>
</dbReference>
<dbReference type="GO" id="GO:0005506">
    <property type="term" value="F:iron ion binding"/>
    <property type="evidence" value="ECO:0007669"/>
    <property type="project" value="UniProtKB-UniRule"/>
</dbReference>
<dbReference type="GO" id="GO:0009102">
    <property type="term" value="P:biotin biosynthetic process"/>
    <property type="evidence" value="ECO:0007669"/>
    <property type="project" value="UniProtKB-UniRule"/>
</dbReference>
<dbReference type="CDD" id="cd01335">
    <property type="entry name" value="Radical_SAM"/>
    <property type="match status" value="1"/>
</dbReference>
<dbReference type="FunFam" id="3.20.20.70:FF:000026">
    <property type="entry name" value="Biotin synthase"/>
    <property type="match status" value="1"/>
</dbReference>
<dbReference type="Gene3D" id="3.20.20.70">
    <property type="entry name" value="Aldolase class I"/>
    <property type="match status" value="1"/>
</dbReference>
<dbReference type="HAMAP" id="MF_01694">
    <property type="entry name" value="BioB"/>
    <property type="match status" value="1"/>
</dbReference>
<dbReference type="InterPro" id="IPR013785">
    <property type="entry name" value="Aldolase_TIM"/>
</dbReference>
<dbReference type="InterPro" id="IPR010722">
    <property type="entry name" value="BATS_dom"/>
</dbReference>
<dbReference type="InterPro" id="IPR002684">
    <property type="entry name" value="Biotin_synth/BioAB"/>
</dbReference>
<dbReference type="InterPro" id="IPR024177">
    <property type="entry name" value="Biotin_synthase"/>
</dbReference>
<dbReference type="InterPro" id="IPR006638">
    <property type="entry name" value="Elp3/MiaA/NifB-like_rSAM"/>
</dbReference>
<dbReference type="InterPro" id="IPR007197">
    <property type="entry name" value="rSAM"/>
</dbReference>
<dbReference type="NCBIfam" id="TIGR00433">
    <property type="entry name" value="bioB"/>
    <property type="match status" value="1"/>
</dbReference>
<dbReference type="PANTHER" id="PTHR22976">
    <property type="entry name" value="BIOTIN SYNTHASE"/>
    <property type="match status" value="1"/>
</dbReference>
<dbReference type="PANTHER" id="PTHR22976:SF2">
    <property type="entry name" value="BIOTIN SYNTHASE, MITOCHONDRIAL"/>
    <property type="match status" value="1"/>
</dbReference>
<dbReference type="Pfam" id="PF06968">
    <property type="entry name" value="BATS"/>
    <property type="match status" value="1"/>
</dbReference>
<dbReference type="Pfam" id="PF04055">
    <property type="entry name" value="Radical_SAM"/>
    <property type="match status" value="1"/>
</dbReference>
<dbReference type="PIRSF" id="PIRSF001619">
    <property type="entry name" value="Biotin_synth"/>
    <property type="match status" value="1"/>
</dbReference>
<dbReference type="SFLD" id="SFLDG01278">
    <property type="entry name" value="biotin_synthase_like"/>
    <property type="match status" value="1"/>
</dbReference>
<dbReference type="SFLD" id="SFLDS00029">
    <property type="entry name" value="Radical_SAM"/>
    <property type="match status" value="1"/>
</dbReference>
<dbReference type="SMART" id="SM00876">
    <property type="entry name" value="BATS"/>
    <property type="match status" value="1"/>
</dbReference>
<dbReference type="SMART" id="SM00729">
    <property type="entry name" value="Elp3"/>
    <property type="match status" value="1"/>
</dbReference>
<dbReference type="SUPFAM" id="SSF102114">
    <property type="entry name" value="Radical SAM enzymes"/>
    <property type="match status" value="1"/>
</dbReference>
<dbReference type="PROSITE" id="PS51918">
    <property type="entry name" value="RADICAL_SAM"/>
    <property type="match status" value="1"/>
</dbReference>
<comment type="function">
    <text evidence="1">Catalyzes the conversion of dethiobiotin (DTB) to biotin by the insertion of a sulfur atom into dethiobiotin via a radical-based mechanism.</text>
</comment>
<comment type="catalytic activity">
    <reaction evidence="1">
        <text>(4R,5S)-dethiobiotin + (sulfur carrier)-SH + 2 reduced [2Fe-2S]-[ferredoxin] + 2 S-adenosyl-L-methionine = (sulfur carrier)-H + biotin + 2 5'-deoxyadenosine + 2 L-methionine + 2 oxidized [2Fe-2S]-[ferredoxin]</text>
        <dbReference type="Rhea" id="RHEA:22060"/>
        <dbReference type="Rhea" id="RHEA-COMP:10000"/>
        <dbReference type="Rhea" id="RHEA-COMP:10001"/>
        <dbReference type="Rhea" id="RHEA-COMP:14737"/>
        <dbReference type="Rhea" id="RHEA-COMP:14739"/>
        <dbReference type="ChEBI" id="CHEBI:17319"/>
        <dbReference type="ChEBI" id="CHEBI:29917"/>
        <dbReference type="ChEBI" id="CHEBI:33737"/>
        <dbReference type="ChEBI" id="CHEBI:33738"/>
        <dbReference type="ChEBI" id="CHEBI:57586"/>
        <dbReference type="ChEBI" id="CHEBI:57844"/>
        <dbReference type="ChEBI" id="CHEBI:59789"/>
        <dbReference type="ChEBI" id="CHEBI:64428"/>
        <dbReference type="ChEBI" id="CHEBI:149473"/>
        <dbReference type="EC" id="2.8.1.6"/>
    </reaction>
</comment>
<comment type="cofactor">
    <cofactor evidence="1">
        <name>[4Fe-4S] cluster</name>
        <dbReference type="ChEBI" id="CHEBI:49883"/>
    </cofactor>
    <text evidence="1">Binds 1 [4Fe-4S] cluster. The cluster is coordinated with 3 cysteines and an exchangeable S-adenosyl-L-methionine.</text>
</comment>
<comment type="cofactor">
    <cofactor evidence="1">
        <name>[2Fe-2S] cluster</name>
        <dbReference type="ChEBI" id="CHEBI:190135"/>
    </cofactor>
    <text evidence="1">Binds 1 [2Fe-2S] cluster. The cluster is coordinated with 3 cysteines and 1 arginine.</text>
</comment>
<comment type="pathway">
    <text evidence="1">Cofactor biosynthesis; biotin biosynthesis; biotin from 7,8-diaminononanoate: step 2/2.</text>
</comment>
<comment type="subunit">
    <text evidence="1">Homodimer.</text>
</comment>
<comment type="similarity">
    <text evidence="1">Belongs to the radical SAM superfamily. Biotin synthase family.</text>
</comment>
<reference key="1">
    <citation type="submission" date="2009-01" db="EMBL/GenBank/DDBJ databases">
        <title>Complete sequence of chromosome of Arthrobacter chlorophenolicus A6.</title>
        <authorList>
            <consortium name="US DOE Joint Genome Institute"/>
            <person name="Lucas S."/>
            <person name="Copeland A."/>
            <person name="Lapidus A."/>
            <person name="Glavina del Rio T."/>
            <person name="Tice H."/>
            <person name="Bruce D."/>
            <person name="Goodwin L."/>
            <person name="Pitluck S."/>
            <person name="Goltsman E."/>
            <person name="Clum A."/>
            <person name="Larimer F."/>
            <person name="Land M."/>
            <person name="Hauser L."/>
            <person name="Kyrpides N."/>
            <person name="Mikhailova N."/>
            <person name="Jansson J."/>
            <person name="Richardson P."/>
        </authorList>
    </citation>
    <scope>NUCLEOTIDE SEQUENCE [LARGE SCALE GENOMIC DNA]</scope>
    <source>
        <strain>ATCC 700700 / DSM 12829 / CIP 107037 / JCM 12360 / KCTC 9906 / NCIMB 13794 / A6</strain>
    </source>
</reference>
<feature type="chain" id="PRO_0000381209" description="Biotin synthase">
    <location>
        <begin position="1"/>
        <end position="337"/>
    </location>
</feature>
<feature type="domain" description="Radical SAM core" evidence="2">
    <location>
        <begin position="58"/>
        <end position="283"/>
    </location>
</feature>
<feature type="binding site" evidence="1">
    <location>
        <position position="73"/>
    </location>
    <ligand>
        <name>[4Fe-4S] cluster</name>
        <dbReference type="ChEBI" id="CHEBI:49883"/>
        <note>4Fe-4S-S-AdoMet</note>
    </ligand>
</feature>
<feature type="binding site" evidence="1">
    <location>
        <position position="77"/>
    </location>
    <ligand>
        <name>[4Fe-4S] cluster</name>
        <dbReference type="ChEBI" id="CHEBI:49883"/>
        <note>4Fe-4S-S-AdoMet</note>
    </ligand>
</feature>
<feature type="binding site" evidence="1">
    <location>
        <position position="80"/>
    </location>
    <ligand>
        <name>[4Fe-4S] cluster</name>
        <dbReference type="ChEBI" id="CHEBI:49883"/>
        <note>4Fe-4S-S-AdoMet</note>
    </ligand>
</feature>
<feature type="binding site" evidence="1">
    <location>
        <position position="116"/>
    </location>
    <ligand>
        <name>[2Fe-2S] cluster</name>
        <dbReference type="ChEBI" id="CHEBI:190135"/>
    </ligand>
</feature>
<feature type="binding site" evidence="1">
    <location>
        <position position="149"/>
    </location>
    <ligand>
        <name>[2Fe-2S] cluster</name>
        <dbReference type="ChEBI" id="CHEBI:190135"/>
    </ligand>
</feature>
<feature type="binding site" evidence="1">
    <location>
        <position position="208"/>
    </location>
    <ligand>
        <name>[2Fe-2S] cluster</name>
        <dbReference type="ChEBI" id="CHEBI:190135"/>
    </ligand>
</feature>
<feature type="binding site" evidence="1">
    <location>
        <position position="278"/>
    </location>
    <ligand>
        <name>[2Fe-2S] cluster</name>
        <dbReference type="ChEBI" id="CHEBI:190135"/>
    </ligand>
</feature>
<keyword id="KW-0001">2Fe-2S</keyword>
<keyword id="KW-0004">4Fe-4S</keyword>
<keyword id="KW-0093">Biotin biosynthesis</keyword>
<keyword id="KW-0408">Iron</keyword>
<keyword id="KW-0411">Iron-sulfur</keyword>
<keyword id="KW-0479">Metal-binding</keyword>
<keyword id="KW-0949">S-adenosyl-L-methionine</keyword>
<keyword id="KW-0808">Transferase</keyword>
<protein>
    <recommendedName>
        <fullName evidence="1">Biotin synthase</fullName>
        <ecNumber evidence="1">2.8.1.6</ecNumber>
    </recommendedName>
</protein>
<organism>
    <name type="scientific">Pseudarthrobacter chlorophenolicus (strain ATCC 700700 / DSM 12829 / CIP 107037 / JCM 12360 / KCTC 9906 / NCIMB 13794 / A6)</name>
    <name type="common">Arthrobacter chlorophenolicus</name>
    <dbReference type="NCBI Taxonomy" id="452863"/>
    <lineage>
        <taxon>Bacteria</taxon>
        <taxon>Bacillati</taxon>
        <taxon>Actinomycetota</taxon>
        <taxon>Actinomycetes</taxon>
        <taxon>Micrococcales</taxon>
        <taxon>Micrococcaceae</taxon>
        <taxon>Pseudarthrobacter</taxon>
    </lineage>
</organism>
<accession>B8HDH4</accession>
<evidence type="ECO:0000255" key="1">
    <source>
        <dbReference type="HAMAP-Rule" id="MF_01694"/>
    </source>
</evidence>
<evidence type="ECO:0000255" key="2">
    <source>
        <dbReference type="PROSITE-ProRule" id="PRU01266"/>
    </source>
</evidence>
<sequence length="337" mass="36615">MTPTVHTWPILETARTQVLEQGIGLTEDQLVEVLQLPDEALPQALELAHQVRLRHCGEDVEVEGIVSIKTGGCPEDCHFCSQSGLFDSPVRGVWLDIPELVKAAKETAATGATEFCIVAAVRGPDIKLMNQVKFAIGRINEEVDINIACSLGMLTQQQVDQLAGWGVHRYNHNLETARSFFPQVVTTHTYEERLETCAMVKAAGMELCCGALLGMGESLHQRAELAAQLAALEPHEVPLNFLNPRPGTPLENQGLMDGKDALRAIAAFRLAMPRTVLRYAGGRELTLGDLGTREGLLGGINAVIVGNYLTTLGRPATADLSLLVDLNMPIRELQKTL</sequence>
<proteinExistence type="inferred from homology"/>